<gene>
    <name evidence="1" type="primary">aroK</name>
    <name type="ordered locus">SAHV_1525</name>
</gene>
<reference key="1">
    <citation type="journal article" date="2008" name="Antimicrob. Agents Chemother.">
        <title>Mutated response regulator graR is responsible for phenotypic conversion of Staphylococcus aureus from heterogeneous vancomycin-intermediate resistance to vancomycin-intermediate resistance.</title>
        <authorList>
            <person name="Neoh H.-M."/>
            <person name="Cui L."/>
            <person name="Yuzawa H."/>
            <person name="Takeuchi F."/>
            <person name="Matsuo M."/>
            <person name="Hiramatsu K."/>
        </authorList>
    </citation>
    <scope>NUCLEOTIDE SEQUENCE [LARGE SCALE GENOMIC DNA]</scope>
    <source>
        <strain>Mu3 / ATCC 700698</strain>
    </source>
</reference>
<sequence>MNHDKSPIILIGFMGTGKSTIGKYVADEQNLSFIDIDSYIEEKYKLTIPEIFSKHGEQYFRNLEFTCLQECINTADIIATGGGIIESEEAFNFLKNQKNIIWLDCNIDIIYSRINDDPHRPNANNKTIKQLNDLYCSRILRYNEIAFKKFDSHLLSISEIYYELLNLIKASDQY</sequence>
<keyword id="KW-0028">Amino-acid biosynthesis</keyword>
<keyword id="KW-0057">Aromatic amino acid biosynthesis</keyword>
<keyword id="KW-0067">ATP-binding</keyword>
<keyword id="KW-0963">Cytoplasm</keyword>
<keyword id="KW-0418">Kinase</keyword>
<keyword id="KW-0460">Magnesium</keyword>
<keyword id="KW-0479">Metal-binding</keyword>
<keyword id="KW-0547">Nucleotide-binding</keyword>
<keyword id="KW-0808">Transferase</keyword>
<evidence type="ECO:0000255" key="1">
    <source>
        <dbReference type="HAMAP-Rule" id="MF_00109"/>
    </source>
</evidence>
<protein>
    <recommendedName>
        <fullName evidence="1">Shikimate kinase</fullName>
        <shortName evidence="1">SK</shortName>
        <ecNumber evidence="1">2.7.1.71</ecNumber>
    </recommendedName>
</protein>
<name>AROK_STAA1</name>
<accession>A7X2S4</accession>
<proteinExistence type="inferred from homology"/>
<organism>
    <name type="scientific">Staphylococcus aureus (strain Mu3 / ATCC 700698)</name>
    <dbReference type="NCBI Taxonomy" id="418127"/>
    <lineage>
        <taxon>Bacteria</taxon>
        <taxon>Bacillati</taxon>
        <taxon>Bacillota</taxon>
        <taxon>Bacilli</taxon>
        <taxon>Bacillales</taxon>
        <taxon>Staphylococcaceae</taxon>
        <taxon>Staphylococcus</taxon>
    </lineage>
</organism>
<comment type="function">
    <text evidence="1">Catalyzes the specific phosphorylation of the 3-hydroxyl group of shikimic acid using ATP as a cosubstrate.</text>
</comment>
<comment type="catalytic activity">
    <reaction evidence="1">
        <text>shikimate + ATP = 3-phosphoshikimate + ADP + H(+)</text>
        <dbReference type="Rhea" id="RHEA:13121"/>
        <dbReference type="ChEBI" id="CHEBI:15378"/>
        <dbReference type="ChEBI" id="CHEBI:30616"/>
        <dbReference type="ChEBI" id="CHEBI:36208"/>
        <dbReference type="ChEBI" id="CHEBI:145989"/>
        <dbReference type="ChEBI" id="CHEBI:456216"/>
        <dbReference type="EC" id="2.7.1.71"/>
    </reaction>
</comment>
<comment type="cofactor">
    <cofactor evidence="1">
        <name>Mg(2+)</name>
        <dbReference type="ChEBI" id="CHEBI:18420"/>
    </cofactor>
    <text evidence="1">Binds 1 Mg(2+) ion per subunit.</text>
</comment>
<comment type="pathway">
    <text evidence="1">Metabolic intermediate biosynthesis; chorismate biosynthesis; chorismate from D-erythrose 4-phosphate and phosphoenolpyruvate: step 5/7.</text>
</comment>
<comment type="subunit">
    <text evidence="1">Monomer.</text>
</comment>
<comment type="subcellular location">
    <subcellularLocation>
        <location evidence="1">Cytoplasm</location>
    </subcellularLocation>
</comment>
<comment type="similarity">
    <text evidence="1">Belongs to the shikimate kinase family.</text>
</comment>
<feature type="chain" id="PRO_1000023003" description="Shikimate kinase">
    <location>
        <begin position="1"/>
        <end position="174"/>
    </location>
</feature>
<feature type="binding site" evidence="1">
    <location>
        <begin position="15"/>
        <end position="20"/>
    </location>
    <ligand>
        <name>ATP</name>
        <dbReference type="ChEBI" id="CHEBI:30616"/>
    </ligand>
</feature>
<feature type="binding site" evidence="1">
    <location>
        <position position="19"/>
    </location>
    <ligand>
        <name>Mg(2+)</name>
        <dbReference type="ChEBI" id="CHEBI:18420"/>
    </ligand>
</feature>
<feature type="binding site" evidence="1">
    <location>
        <position position="37"/>
    </location>
    <ligand>
        <name>substrate</name>
    </ligand>
</feature>
<feature type="binding site" evidence="1">
    <location>
        <position position="61"/>
    </location>
    <ligand>
        <name>substrate</name>
    </ligand>
</feature>
<feature type="binding site" evidence="1">
    <location>
        <position position="82"/>
    </location>
    <ligand>
        <name>substrate</name>
    </ligand>
</feature>
<feature type="binding site" evidence="1">
    <location>
        <position position="120"/>
    </location>
    <ligand>
        <name>ATP</name>
        <dbReference type="ChEBI" id="CHEBI:30616"/>
    </ligand>
</feature>
<feature type="binding site" evidence="1">
    <location>
        <position position="138"/>
    </location>
    <ligand>
        <name>substrate</name>
    </ligand>
</feature>
<dbReference type="EC" id="2.7.1.71" evidence="1"/>
<dbReference type="EMBL" id="AP009324">
    <property type="protein sequence ID" value="BAF78408.1"/>
    <property type="molecule type" value="Genomic_DNA"/>
</dbReference>
<dbReference type="RefSeq" id="WP_001015120.1">
    <property type="nucleotide sequence ID" value="NC_009782.1"/>
</dbReference>
<dbReference type="SMR" id="A7X2S4"/>
<dbReference type="KEGG" id="saw:SAHV_1525"/>
<dbReference type="HOGENOM" id="CLU_057607_4_3_9"/>
<dbReference type="UniPathway" id="UPA00053">
    <property type="reaction ID" value="UER00088"/>
</dbReference>
<dbReference type="GO" id="GO:0005829">
    <property type="term" value="C:cytosol"/>
    <property type="evidence" value="ECO:0007669"/>
    <property type="project" value="TreeGrafter"/>
</dbReference>
<dbReference type="GO" id="GO:0005524">
    <property type="term" value="F:ATP binding"/>
    <property type="evidence" value="ECO:0007669"/>
    <property type="project" value="UniProtKB-UniRule"/>
</dbReference>
<dbReference type="GO" id="GO:0000287">
    <property type="term" value="F:magnesium ion binding"/>
    <property type="evidence" value="ECO:0007669"/>
    <property type="project" value="UniProtKB-UniRule"/>
</dbReference>
<dbReference type="GO" id="GO:0004765">
    <property type="term" value="F:shikimate kinase activity"/>
    <property type="evidence" value="ECO:0007669"/>
    <property type="project" value="UniProtKB-UniRule"/>
</dbReference>
<dbReference type="GO" id="GO:0008652">
    <property type="term" value="P:amino acid biosynthetic process"/>
    <property type="evidence" value="ECO:0007669"/>
    <property type="project" value="UniProtKB-KW"/>
</dbReference>
<dbReference type="GO" id="GO:0009073">
    <property type="term" value="P:aromatic amino acid family biosynthetic process"/>
    <property type="evidence" value="ECO:0007669"/>
    <property type="project" value="UniProtKB-KW"/>
</dbReference>
<dbReference type="GO" id="GO:0009423">
    <property type="term" value="P:chorismate biosynthetic process"/>
    <property type="evidence" value="ECO:0007669"/>
    <property type="project" value="UniProtKB-UniRule"/>
</dbReference>
<dbReference type="CDD" id="cd00464">
    <property type="entry name" value="SK"/>
    <property type="match status" value="1"/>
</dbReference>
<dbReference type="FunFam" id="3.40.50.300:FF:001734">
    <property type="entry name" value="Shikimate kinase"/>
    <property type="match status" value="1"/>
</dbReference>
<dbReference type="Gene3D" id="3.40.50.300">
    <property type="entry name" value="P-loop containing nucleotide triphosphate hydrolases"/>
    <property type="match status" value="1"/>
</dbReference>
<dbReference type="HAMAP" id="MF_00109">
    <property type="entry name" value="Shikimate_kinase"/>
    <property type="match status" value="1"/>
</dbReference>
<dbReference type="InterPro" id="IPR027417">
    <property type="entry name" value="P-loop_NTPase"/>
</dbReference>
<dbReference type="InterPro" id="IPR031322">
    <property type="entry name" value="Shikimate/glucono_kinase"/>
</dbReference>
<dbReference type="InterPro" id="IPR000623">
    <property type="entry name" value="Shikimate_kinase/TSH1"/>
</dbReference>
<dbReference type="InterPro" id="IPR023000">
    <property type="entry name" value="Shikimate_kinase_CS"/>
</dbReference>
<dbReference type="PANTHER" id="PTHR21087">
    <property type="entry name" value="SHIKIMATE KINASE"/>
    <property type="match status" value="1"/>
</dbReference>
<dbReference type="PANTHER" id="PTHR21087:SF16">
    <property type="entry name" value="SHIKIMATE KINASE 1, CHLOROPLASTIC"/>
    <property type="match status" value="1"/>
</dbReference>
<dbReference type="Pfam" id="PF01202">
    <property type="entry name" value="SKI"/>
    <property type="match status" value="1"/>
</dbReference>
<dbReference type="PRINTS" id="PR01100">
    <property type="entry name" value="SHIKIMTKNASE"/>
</dbReference>
<dbReference type="SUPFAM" id="SSF52540">
    <property type="entry name" value="P-loop containing nucleoside triphosphate hydrolases"/>
    <property type="match status" value="1"/>
</dbReference>
<dbReference type="PROSITE" id="PS01128">
    <property type="entry name" value="SHIKIMATE_KINASE"/>
    <property type="match status" value="1"/>
</dbReference>